<protein>
    <recommendedName>
        <fullName evidence="1">Thymidylate kinase</fullName>
        <ecNumber evidence="1">2.7.4.9</ecNumber>
    </recommendedName>
    <alternativeName>
        <fullName evidence="1">dTMP kinase</fullName>
    </alternativeName>
</protein>
<sequence>MSGRFIVLDGIDGCGKSTQLDHLLGWLPGSGLMPAGAELISTREPGGTPLGRSVRELLLHTRAEQAPAPTAELLLYAADRAQHVERLILPTLERGDWVISDRFSGSTMAYQGYGRGLDRQLIDQLERIATAGVQPDLTLWLTLPLEESLRRRQGDQADRIEAEGQVFLQRVIDGFAAIAEQRQWSAIAADRPPEAVSRALERELMDRLG</sequence>
<proteinExistence type="inferred from homology"/>
<name>KTHY_PARMW</name>
<reference key="1">
    <citation type="journal article" date="2003" name="Nature">
        <title>The genome of a motile marine Synechococcus.</title>
        <authorList>
            <person name="Palenik B."/>
            <person name="Brahamsha B."/>
            <person name="Larimer F.W."/>
            <person name="Land M.L."/>
            <person name="Hauser L."/>
            <person name="Chain P."/>
            <person name="Lamerdin J.E."/>
            <person name="Regala W."/>
            <person name="Allen E.E."/>
            <person name="McCarren J."/>
            <person name="Paulsen I.T."/>
            <person name="Dufresne A."/>
            <person name="Partensky F."/>
            <person name="Webb E.A."/>
            <person name="Waterbury J."/>
        </authorList>
    </citation>
    <scope>NUCLEOTIDE SEQUENCE [LARGE SCALE GENOMIC DNA]</scope>
    <source>
        <strain>WH8102</strain>
    </source>
</reference>
<evidence type="ECO:0000255" key="1">
    <source>
        <dbReference type="HAMAP-Rule" id="MF_00165"/>
    </source>
</evidence>
<feature type="chain" id="PRO_0000155357" description="Thymidylate kinase">
    <location>
        <begin position="1"/>
        <end position="209"/>
    </location>
</feature>
<feature type="binding site" evidence="1">
    <location>
        <begin position="10"/>
        <end position="17"/>
    </location>
    <ligand>
        <name>ATP</name>
        <dbReference type="ChEBI" id="CHEBI:30616"/>
    </ligand>
</feature>
<keyword id="KW-0067">ATP-binding</keyword>
<keyword id="KW-0418">Kinase</keyword>
<keyword id="KW-0545">Nucleotide biosynthesis</keyword>
<keyword id="KW-0547">Nucleotide-binding</keyword>
<keyword id="KW-0808">Transferase</keyword>
<dbReference type="EC" id="2.7.4.9" evidence="1"/>
<dbReference type="EMBL" id="BX569695">
    <property type="protein sequence ID" value="CAE08753.1"/>
    <property type="molecule type" value="Genomic_DNA"/>
</dbReference>
<dbReference type="RefSeq" id="WP_011129091.1">
    <property type="nucleotide sequence ID" value="NC_005070.1"/>
</dbReference>
<dbReference type="SMR" id="Q7U437"/>
<dbReference type="STRING" id="84588.SYNW2238"/>
<dbReference type="KEGG" id="syw:SYNW2238"/>
<dbReference type="eggNOG" id="COG0125">
    <property type="taxonomic scope" value="Bacteria"/>
</dbReference>
<dbReference type="HOGENOM" id="CLU_049131_0_0_3"/>
<dbReference type="Proteomes" id="UP000001422">
    <property type="component" value="Chromosome"/>
</dbReference>
<dbReference type="GO" id="GO:0005829">
    <property type="term" value="C:cytosol"/>
    <property type="evidence" value="ECO:0007669"/>
    <property type="project" value="TreeGrafter"/>
</dbReference>
<dbReference type="GO" id="GO:0005524">
    <property type="term" value="F:ATP binding"/>
    <property type="evidence" value="ECO:0007669"/>
    <property type="project" value="UniProtKB-UniRule"/>
</dbReference>
<dbReference type="GO" id="GO:0004798">
    <property type="term" value="F:dTMP kinase activity"/>
    <property type="evidence" value="ECO:0007669"/>
    <property type="project" value="UniProtKB-UniRule"/>
</dbReference>
<dbReference type="GO" id="GO:0006233">
    <property type="term" value="P:dTDP biosynthetic process"/>
    <property type="evidence" value="ECO:0007669"/>
    <property type="project" value="InterPro"/>
</dbReference>
<dbReference type="GO" id="GO:0006235">
    <property type="term" value="P:dTTP biosynthetic process"/>
    <property type="evidence" value="ECO:0007669"/>
    <property type="project" value="UniProtKB-UniRule"/>
</dbReference>
<dbReference type="GO" id="GO:0006227">
    <property type="term" value="P:dUDP biosynthetic process"/>
    <property type="evidence" value="ECO:0007669"/>
    <property type="project" value="TreeGrafter"/>
</dbReference>
<dbReference type="CDD" id="cd01672">
    <property type="entry name" value="TMPK"/>
    <property type="match status" value="1"/>
</dbReference>
<dbReference type="FunFam" id="3.40.50.300:FF:000225">
    <property type="entry name" value="Thymidylate kinase"/>
    <property type="match status" value="1"/>
</dbReference>
<dbReference type="Gene3D" id="3.40.50.300">
    <property type="entry name" value="P-loop containing nucleotide triphosphate hydrolases"/>
    <property type="match status" value="1"/>
</dbReference>
<dbReference type="HAMAP" id="MF_00165">
    <property type="entry name" value="Thymidylate_kinase"/>
    <property type="match status" value="1"/>
</dbReference>
<dbReference type="InterPro" id="IPR027417">
    <property type="entry name" value="P-loop_NTPase"/>
</dbReference>
<dbReference type="InterPro" id="IPR039430">
    <property type="entry name" value="Thymidylate_kin-like_dom"/>
</dbReference>
<dbReference type="InterPro" id="IPR018095">
    <property type="entry name" value="Thymidylate_kin_CS"/>
</dbReference>
<dbReference type="InterPro" id="IPR018094">
    <property type="entry name" value="Thymidylate_kinase"/>
</dbReference>
<dbReference type="NCBIfam" id="TIGR00041">
    <property type="entry name" value="DTMP_kinase"/>
    <property type="match status" value="1"/>
</dbReference>
<dbReference type="PANTHER" id="PTHR10344">
    <property type="entry name" value="THYMIDYLATE KINASE"/>
    <property type="match status" value="1"/>
</dbReference>
<dbReference type="PANTHER" id="PTHR10344:SF4">
    <property type="entry name" value="UMP-CMP KINASE 2, MITOCHONDRIAL"/>
    <property type="match status" value="1"/>
</dbReference>
<dbReference type="Pfam" id="PF02223">
    <property type="entry name" value="Thymidylate_kin"/>
    <property type="match status" value="1"/>
</dbReference>
<dbReference type="SUPFAM" id="SSF52540">
    <property type="entry name" value="P-loop containing nucleoside triphosphate hydrolases"/>
    <property type="match status" value="1"/>
</dbReference>
<dbReference type="PROSITE" id="PS01331">
    <property type="entry name" value="THYMIDYLATE_KINASE"/>
    <property type="match status" value="1"/>
</dbReference>
<gene>
    <name evidence="1" type="primary">tmk</name>
    <name type="ordered locus">SYNW2238</name>
</gene>
<comment type="function">
    <text evidence="1">Phosphorylation of dTMP to form dTDP in both de novo and salvage pathways of dTTP synthesis.</text>
</comment>
<comment type="catalytic activity">
    <reaction evidence="1">
        <text>dTMP + ATP = dTDP + ADP</text>
        <dbReference type="Rhea" id="RHEA:13517"/>
        <dbReference type="ChEBI" id="CHEBI:30616"/>
        <dbReference type="ChEBI" id="CHEBI:58369"/>
        <dbReference type="ChEBI" id="CHEBI:63528"/>
        <dbReference type="ChEBI" id="CHEBI:456216"/>
        <dbReference type="EC" id="2.7.4.9"/>
    </reaction>
</comment>
<comment type="similarity">
    <text evidence="1">Belongs to the thymidylate kinase family.</text>
</comment>
<organism>
    <name type="scientific">Parasynechococcus marenigrum (strain WH8102)</name>
    <dbReference type="NCBI Taxonomy" id="84588"/>
    <lineage>
        <taxon>Bacteria</taxon>
        <taxon>Bacillati</taxon>
        <taxon>Cyanobacteriota</taxon>
        <taxon>Cyanophyceae</taxon>
        <taxon>Synechococcales</taxon>
        <taxon>Prochlorococcaceae</taxon>
        <taxon>Parasynechococcus</taxon>
        <taxon>Parasynechococcus marenigrum</taxon>
    </lineage>
</organism>
<accession>Q7U437</accession>